<dbReference type="EC" id="3.2.2.9" evidence="1"/>
<dbReference type="EMBL" id="CP000308">
    <property type="protein sequence ID" value="ABG14845.1"/>
    <property type="molecule type" value="Genomic_DNA"/>
</dbReference>
<dbReference type="RefSeq" id="WP_002264455.1">
    <property type="nucleotide sequence ID" value="NC_008150.1"/>
</dbReference>
<dbReference type="SMR" id="Q1C3X7"/>
<dbReference type="KEGG" id="ypa:YPA_2883"/>
<dbReference type="UniPathway" id="UPA00904">
    <property type="reaction ID" value="UER00871"/>
</dbReference>
<dbReference type="Proteomes" id="UP000001971">
    <property type="component" value="Chromosome"/>
</dbReference>
<dbReference type="GO" id="GO:0005829">
    <property type="term" value="C:cytosol"/>
    <property type="evidence" value="ECO:0007669"/>
    <property type="project" value="TreeGrafter"/>
</dbReference>
<dbReference type="GO" id="GO:0008782">
    <property type="term" value="F:adenosylhomocysteine nucleosidase activity"/>
    <property type="evidence" value="ECO:0007669"/>
    <property type="project" value="UniProtKB-UniRule"/>
</dbReference>
<dbReference type="GO" id="GO:0008930">
    <property type="term" value="F:methylthioadenosine nucleosidase activity"/>
    <property type="evidence" value="ECO:0007669"/>
    <property type="project" value="UniProtKB-UniRule"/>
</dbReference>
<dbReference type="GO" id="GO:0019509">
    <property type="term" value="P:L-methionine salvage from methylthioadenosine"/>
    <property type="evidence" value="ECO:0007669"/>
    <property type="project" value="UniProtKB-UniRule"/>
</dbReference>
<dbReference type="GO" id="GO:0019284">
    <property type="term" value="P:L-methionine salvage from S-adenosylmethionine"/>
    <property type="evidence" value="ECO:0007669"/>
    <property type="project" value="TreeGrafter"/>
</dbReference>
<dbReference type="GO" id="GO:0046124">
    <property type="term" value="P:purine deoxyribonucleoside catabolic process"/>
    <property type="evidence" value="ECO:0007669"/>
    <property type="project" value="UniProtKB-UniRule"/>
</dbReference>
<dbReference type="CDD" id="cd09008">
    <property type="entry name" value="MTAN"/>
    <property type="match status" value="1"/>
</dbReference>
<dbReference type="FunFam" id="3.40.50.1580:FF:000001">
    <property type="entry name" value="MTA/SAH nucleosidase family protein"/>
    <property type="match status" value="1"/>
</dbReference>
<dbReference type="Gene3D" id="3.40.50.1580">
    <property type="entry name" value="Nucleoside phosphorylase domain"/>
    <property type="match status" value="1"/>
</dbReference>
<dbReference type="HAMAP" id="MF_01684">
    <property type="entry name" value="Salvage_MtnN"/>
    <property type="match status" value="1"/>
</dbReference>
<dbReference type="InterPro" id="IPR010049">
    <property type="entry name" value="MTA_SAH_Nsdase"/>
</dbReference>
<dbReference type="InterPro" id="IPR000845">
    <property type="entry name" value="Nucleoside_phosphorylase_d"/>
</dbReference>
<dbReference type="InterPro" id="IPR035994">
    <property type="entry name" value="Nucleoside_phosphorylase_sf"/>
</dbReference>
<dbReference type="NCBIfam" id="TIGR01704">
    <property type="entry name" value="MTA_SAH-Nsdase"/>
    <property type="match status" value="1"/>
</dbReference>
<dbReference type="NCBIfam" id="NF004079">
    <property type="entry name" value="PRK05584.1"/>
    <property type="match status" value="1"/>
</dbReference>
<dbReference type="PANTHER" id="PTHR46832">
    <property type="entry name" value="5'-METHYLTHIOADENOSINE/S-ADENOSYLHOMOCYSTEINE NUCLEOSIDASE"/>
    <property type="match status" value="1"/>
</dbReference>
<dbReference type="PANTHER" id="PTHR46832:SF1">
    <property type="entry name" value="5'-METHYLTHIOADENOSINE_S-ADENOSYLHOMOCYSTEINE NUCLEOSIDASE"/>
    <property type="match status" value="1"/>
</dbReference>
<dbReference type="Pfam" id="PF01048">
    <property type="entry name" value="PNP_UDP_1"/>
    <property type="match status" value="1"/>
</dbReference>
<dbReference type="SUPFAM" id="SSF53167">
    <property type="entry name" value="Purine and uridine phosphorylases"/>
    <property type="match status" value="1"/>
</dbReference>
<comment type="function">
    <text evidence="1">Catalyzes the irreversible cleavage of the glycosidic bond in both 5'-methylthioadenosine (MTA) and S-adenosylhomocysteine (SAH/AdoHcy) to adenine and the corresponding thioribose, 5'-methylthioribose and S-ribosylhomocysteine, respectively. Also cleaves 5'-deoxyadenosine, a toxic by-product of radical S-adenosylmethionine (SAM) enzymes, into 5-deoxyribose and adenine. Thus, is required for in vivo function of the radical SAM enzymes biotin synthase and lipoic acid synthase, that are inhibited by 5'-deoxyadenosine accumulation.</text>
</comment>
<comment type="catalytic activity">
    <reaction evidence="1">
        <text>S-adenosyl-L-homocysteine + H2O = S-(5-deoxy-D-ribos-5-yl)-L-homocysteine + adenine</text>
        <dbReference type="Rhea" id="RHEA:17805"/>
        <dbReference type="ChEBI" id="CHEBI:15377"/>
        <dbReference type="ChEBI" id="CHEBI:16708"/>
        <dbReference type="ChEBI" id="CHEBI:57856"/>
        <dbReference type="ChEBI" id="CHEBI:58195"/>
        <dbReference type="EC" id="3.2.2.9"/>
    </reaction>
</comment>
<comment type="catalytic activity">
    <reaction evidence="1">
        <text>S-methyl-5'-thioadenosine + H2O = 5-(methylsulfanyl)-D-ribose + adenine</text>
        <dbReference type="Rhea" id="RHEA:13617"/>
        <dbReference type="ChEBI" id="CHEBI:15377"/>
        <dbReference type="ChEBI" id="CHEBI:16708"/>
        <dbReference type="ChEBI" id="CHEBI:17509"/>
        <dbReference type="ChEBI" id="CHEBI:78440"/>
        <dbReference type="EC" id="3.2.2.9"/>
    </reaction>
</comment>
<comment type="catalytic activity">
    <reaction evidence="1">
        <text>5'-deoxyadenosine + H2O = 5-deoxy-D-ribose + adenine</text>
        <dbReference type="Rhea" id="RHEA:29859"/>
        <dbReference type="ChEBI" id="CHEBI:15377"/>
        <dbReference type="ChEBI" id="CHEBI:16708"/>
        <dbReference type="ChEBI" id="CHEBI:17319"/>
        <dbReference type="ChEBI" id="CHEBI:149540"/>
        <dbReference type="EC" id="3.2.2.9"/>
    </reaction>
    <physiologicalReaction direction="left-to-right" evidence="1">
        <dbReference type="Rhea" id="RHEA:29860"/>
    </physiologicalReaction>
</comment>
<comment type="pathway">
    <text evidence="1">Amino-acid biosynthesis; L-methionine biosynthesis via salvage pathway; S-methyl-5-thio-alpha-D-ribose 1-phosphate from S-methyl-5'-thioadenosine (hydrolase route): step 1/2.</text>
</comment>
<comment type="subunit">
    <text evidence="1">Homodimer.</text>
</comment>
<comment type="similarity">
    <text evidence="1">Belongs to the PNP/UDP phosphorylase family. MtnN subfamily.</text>
</comment>
<feature type="chain" id="PRO_0000359394" description="5'-methylthioadenosine/S-adenosylhomocysteine nucleosidase">
    <location>
        <begin position="1"/>
        <end position="233"/>
    </location>
</feature>
<feature type="active site" description="Proton acceptor" evidence="1">
    <location>
        <position position="12"/>
    </location>
</feature>
<feature type="active site" description="Proton donor" evidence="1">
    <location>
        <position position="197"/>
    </location>
</feature>
<feature type="binding site" evidence="1">
    <location>
        <position position="78"/>
    </location>
    <ligand>
        <name>substrate</name>
    </ligand>
</feature>
<feature type="binding site" evidence="1">
    <location>
        <position position="152"/>
    </location>
    <ligand>
        <name>substrate</name>
    </ligand>
</feature>
<feature type="binding site" evidence="1">
    <location>
        <begin position="173"/>
        <end position="174"/>
    </location>
    <ligand>
        <name>substrate</name>
    </ligand>
</feature>
<gene>
    <name evidence="1" type="primary">mtnN</name>
    <name type="ordered locus">YPA_2883</name>
</gene>
<evidence type="ECO:0000255" key="1">
    <source>
        <dbReference type="HAMAP-Rule" id="MF_01684"/>
    </source>
</evidence>
<name>MTNN_YERPA</name>
<sequence>MKVGIIGAMEEEVTLLRDRIENRQTLARAGCEIYTGQLNGIDVALLKSGIGKVAAAMGTTLLLEHCQPDLVINTGSAGGLDSSLKVGDIVVSNEVRYHDADVTAFGYEPGQMAGCPAAFVADEDLIALAENCIQQLKLNAVRGLICSGDAFINGAEPLTRIRAAFPTVAAVEMEAAAIGHVCYLFNTPFVVVRAISDVADQASHLSFEEFLVVAAKQSTLMIKAMLTTLAQRG</sequence>
<accession>Q1C3X7</accession>
<organism>
    <name type="scientific">Yersinia pestis bv. Antiqua (strain Antiqua)</name>
    <dbReference type="NCBI Taxonomy" id="360102"/>
    <lineage>
        <taxon>Bacteria</taxon>
        <taxon>Pseudomonadati</taxon>
        <taxon>Pseudomonadota</taxon>
        <taxon>Gammaproteobacteria</taxon>
        <taxon>Enterobacterales</taxon>
        <taxon>Yersiniaceae</taxon>
        <taxon>Yersinia</taxon>
    </lineage>
</organism>
<reference key="1">
    <citation type="journal article" date="2006" name="J. Bacteriol.">
        <title>Complete genome sequence of Yersinia pestis strains Antiqua and Nepal516: evidence of gene reduction in an emerging pathogen.</title>
        <authorList>
            <person name="Chain P.S.G."/>
            <person name="Hu P."/>
            <person name="Malfatti S.A."/>
            <person name="Radnedge L."/>
            <person name="Larimer F."/>
            <person name="Vergez L.M."/>
            <person name="Worsham P."/>
            <person name="Chu M.C."/>
            <person name="Andersen G.L."/>
        </authorList>
    </citation>
    <scope>NUCLEOTIDE SEQUENCE [LARGE SCALE GENOMIC DNA]</scope>
    <source>
        <strain>Antiqua</strain>
    </source>
</reference>
<keyword id="KW-0028">Amino-acid biosynthesis</keyword>
<keyword id="KW-0378">Hydrolase</keyword>
<keyword id="KW-0486">Methionine biosynthesis</keyword>
<proteinExistence type="inferred from homology"/>
<protein>
    <recommendedName>
        <fullName evidence="1">5'-methylthioadenosine/S-adenosylhomocysteine nucleosidase</fullName>
        <shortName evidence="1">MTA/SAH nucleosidase</shortName>
        <shortName evidence="1">MTAN</shortName>
        <ecNumber evidence="1">3.2.2.9</ecNumber>
    </recommendedName>
    <alternativeName>
        <fullName evidence="1">5'-deoxyadenosine nucleosidase</fullName>
        <shortName evidence="1">DOA nucleosidase</shortName>
        <shortName evidence="1">dAdo nucleosidase</shortName>
    </alternativeName>
    <alternativeName>
        <fullName evidence="1">5'-methylthioadenosine nucleosidase</fullName>
        <shortName evidence="1">MTA nucleosidase</shortName>
    </alternativeName>
    <alternativeName>
        <fullName evidence="1">S-adenosylhomocysteine nucleosidase</fullName>
        <shortName evidence="1">AdoHcy nucleosidase</shortName>
        <shortName evidence="1">SAH nucleosidase</shortName>
        <shortName evidence="1">SRH nucleosidase</shortName>
    </alternativeName>
</protein>